<dbReference type="EMBL" id="AY299399">
    <property type="protein sequence ID" value="AAQ72924.1"/>
    <property type="molecule type" value="mRNA"/>
</dbReference>
<dbReference type="RefSeq" id="NP_958428.1">
    <property type="nucleotide sequence ID" value="NM_201271.1"/>
</dbReference>
<dbReference type="FunCoup" id="Q6WAY2">
    <property type="interactions" value="396"/>
</dbReference>
<dbReference type="STRING" id="10116.ENSRNOP00000071374"/>
<dbReference type="GlyCosmos" id="Q6WAY2">
    <property type="glycosylation" value="3 sites, No reported glycans"/>
</dbReference>
<dbReference type="GlyGen" id="Q6WAY2">
    <property type="glycosylation" value="3 sites"/>
</dbReference>
<dbReference type="PhosphoSitePlus" id="Q6WAY2"/>
<dbReference type="PaxDb" id="10116-ENSRNOP00000009987"/>
<dbReference type="GeneID" id="298062"/>
<dbReference type="KEGG" id="rno:298062"/>
<dbReference type="UCSC" id="RGD:1303116">
    <property type="organism name" value="rat"/>
</dbReference>
<dbReference type="AGR" id="RGD:1303116"/>
<dbReference type="CTD" id="54886"/>
<dbReference type="RGD" id="1303116">
    <property type="gene designation" value="Plppr1"/>
</dbReference>
<dbReference type="eggNOG" id="KOG3030">
    <property type="taxonomic scope" value="Eukaryota"/>
</dbReference>
<dbReference type="InParanoid" id="Q6WAY2"/>
<dbReference type="PhylomeDB" id="Q6WAY2"/>
<dbReference type="Reactome" id="R-RNO-419408">
    <property type="pathway name" value="Lysosphingolipid and LPA receptors"/>
</dbReference>
<dbReference type="PRO" id="PR:Q6WAY2"/>
<dbReference type="Proteomes" id="UP000002494">
    <property type="component" value="Unplaced"/>
</dbReference>
<dbReference type="GO" id="GO:0043005">
    <property type="term" value="C:neuron projection"/>
    <property type="evidence" value="ECO:0000314"/>
    <property type="project" value="UniProtKB"/>
</dbReference>
<dbReference type="GO" id="GO:0005886">
    <property type="term" value="C:plasma membrane"/>
    <property type="evidence" value="ECO:0000314"/>
    <property type="project" value="UniProtKB"/>
</dbReference>
<dbReference type="GO" id="GO:0008195">
    <property type="term" value="F:phosphatidate phosphatase activity"/>
    <property type="evidence" value="ECO:0000318"/>
    <property type="project" value="GO_Central"/>
</dbReference>
<dbReference type="GO" id="GO:0007399">
    <property type="term" value="P:nervous system development"/>
    <property type="evidence" value="ECO:0000315"/>
    <property type="project" value="RGD"/>
</dbReference>
<dbReference type="GO" id="GO:0006644">
    <property type="term" value="P:phospholipid metabolic process"/>
    <property type="evidence" value="ECO:0000318"/>
    <property type="project" value="GO_Central"/>
</dbReference>
<dbReference type="GO" id="GO:0007165">
    <property type="term" value="P:signal transduction"/>
    <property type="evidence" value="ECO:0000318"/>
    <property type="project" value="GO_Central"/>
</dbReference>
<dbReference type="CDD" id="cd03384">
    <property type="entry name" value="PAP2_wunen"/>
    <property type="match status" value="1"/>
</dbReference>
<dbReference type="FunFam" id="1.20.144.10:FF:000005">
    <property type="entry name" value="phospholipid phosphatase-related protein type 1"/>
    <property type="match status" value="1"/>
</dbReference>
<dbReference type="Gene3D" id="1.20.144.10">
    <property type="entry name" value="Phosphatidic acid phosphatase type 2/haloperoxidase"/>
    <property type="match status" value="1"/>
</dbReference>
<dbReference type="InterPro" id="IPR036938">
    <property type="entry name" value="P_Acid_Pase_2/haloperoxi_sf"/>
</dbReference>
<dbReference type="InterPro" id="IPR000326">
    <property type="entry name" value="P_Acid_Pase_2/haloperoxidase"/>
</dbReference>
<dbReference type="InterPro" id="IPR043216">
    <property type="entry name" value="PA_PP_rel"/>
</dbReference>
<dbReference type="PANTHER" id="PTHR10165">
    <property type="entry name" value="LIPID PHOSPHATE PHOSPHATASE"/>
    <property type="match status" value="1"/>
</dbReference>
<dbReference type="PANTHER" id="PTHR10165:SF41">
    <property type="entry name" value="PHOSPHOLIPID PHOSPHATASE-RELATED PROTEIN TYPE 1"/>
    <property type="match status" value="1"/>
</dbReference>
<dbReference type="Pfam" id="PF01569">
    <property type="entry name" value="PAP2"/>
    <property type="match status" value="1"/>
</dbReference>
<dbReference type="SMART" id="SM00014">
    <property type="entry name" value="acidPPc"/>
    <property type="match status" value="1"/>
</dbReference>
<dbReference type="SUPFAM" id="SSF48317">
    <property type="entry name" value="Acid phosphatase/Vanadium-dependent haloperoxidase"/>
    <property type="match status" value="1"/>
</dbReference>
<feature type="chain" id="PRO_0000317534" description="Phospholipid phosphatase-related protein type 1">
    <location>
        <begin position="1"/>
        <end position="325"/>
    </location>
</feature>
<feature type="transmembrane region" description="Helical" evidence="3">
    <location>
        <begin position="13"/>
        <end position="33"/>
    </location>
</feature>
<feature type="transmembrane region" description="Helical" evidence="3">
    <location>
        <begin position="67"/>
        <end position="87"/>
    </location>
</feature>
<feature type="transmembrane region" description="Helical" evidence="3">
    <location>
        <begin position="127"/>
        <end position="147"/>
    </location>
</feature>
<feature type="transmembrane region" description="Helical" evidence="3">
    <location>
        <begin position="201"/>
        <end position="219"/>
    </location>
</feature>
<feature type="transmembrane region" description="Helical" evidence="3">
    <location>
        <begin position="226"/>
        <end position="244"/>
    </location>
</feature>
<feature type="transmembrane region" description="Helical" evidence="3">
    <location>
        <begin position="257"/>
        <end position="277"/>
    </location>
</feature>
<feature type="modified residue" description="Phosphoserine" evidence="1">
    <location>
        <position position="307"/>
    </location>
</feature>
<feature type="glycosylation site" description="N-linked (GlcNAc...) asparagine" evidence="3">
    <location>
        <position position="5"/>
    </location>
</feature>
<feature type="glycosylation site" description="N-linked (GlcNAc...) asparagine" evidence="3">
    <location>
        <position position="163"/>
    </location>
</feature>
<feature type="glycosylation site" description="N-linked (GlcNAc...) asparagine" evidence="3">
    <location>
        <position position="316"/>
    </location>
</feature>
<sequence length="325" mass="35887">MAVENNTQRSYSIIPCFIFVELVIMAGTVLLAYYFECTDTFQVHIQGFFCQDGDLMKPYPGTEEESFISPLVLYCVLAATPTAIIFIGEISMYFIKSTRESLIAEEKMILTGDCCYLSPLLRRIVRFIGVFAFGLFATDIFVNAGQVVTGHLTPYFLTVCQPNYTSTDCRAHHQFINNGNICTGDLEVIEKARRSFPSKHAALSIYSALYATMYITSTIKTKSSRLAKPVLCLGDLCTAFLTGLNRVSEYRNHCSDVIAGFILGTAVALFLGMCVVHNFKGTQGSASKPKPEDPRGVPLMAFPRIESPLETLSAQNHSASMTEVT</sequence>
<proteinExistence type="evidence at transcript level"/>
<reference key="1">
    <citation type="journal article" date="2004" name="Eur. J. Neurosci.">
        <title>Molecular cloning and expression regulation of PRG-3, a new member of the plasticity-related gene family.</title>
        <authorList>
            <person name="Savaskan N.E."/>
            <person name="Brauer A.U."/>
            <person name="Nitsch R."/>
        </authorList>
    </citation>
    <scope>NUCLEOTIDE SEQUENCE [MRNA]</scope>
    <scope>FUNCTION</scope>
    <scope>SUBCELLULAR LOCATION</scope>
    <scope>TISSUE SPECIFICITY</scope>
    <scope>DEVELOPMENTAL STAGE</scope>
    <scope>INDUCTION</scope>
    <scope>CAUTION</scope>
    <source>
        <strain>Sprague-Dawley</strain>
        <tissue>Brain</tissue>
    </source>
</reference>
<accession>Q6WAY2</accession>
<keyword id="KW-1003">Cell membrane</keyword>
<keyword id="KW-0966">Cell projection</keyword>
<keyword id="KW-0325">Glycoprotein</keyword>
<keyword id="KW-0472">Membrane</keyword>
<keyword id="KW-0597">Phosphoprotein</keyword>
<keyword id="KW-1185">Reference proteome</keyword>
<keyword id="KW-0812">Transmembrane</keyword>
<keyword id="KW-1133">Transmembrane helix</keyword>
<evidence type="ECO:0000250" key="1">
    <source>
        <dbReference type="UniProtKB" id="Q8BFZ2"/>
    </source>
</evidence>
<evidence type="ECO:0000250" key="2">
    <source>
        <dbReference type="UniProtKB" id="Q8TBJ4"/>
    </source>
</evidence>
<evidence type="ECO:0000255" key="3"/>
<evidence type="ECO:0000269" key="4">
    <source>
    </source>
</evidence>
<evidence type="ECO:0000303" key="5">
    <source>
    </source>
</evidence>
<evidence type="ECO:0000305" key="6"/>
<evidence type="ECO:0000305" key="7">
    <source>
    </source>
</evidence>
<evidence type="ECO:0000312" key="8">
    <source>
        <dbReference type="RGD" id="1303116"/>
    </source>
</evidence>
<comment type="function">
    <text evidence="4">May play a role in neurite outgrowth and neurogenesis.</text>
</comment>
<comment type="subcellular location">
    <subcellularLocation>
        <location evidence="4">Cell membrane</location>
        <topology evidence="3">Multi-pass membrane protein</topology>
    </subcellularLocation>
    <subcellularLocation>
        <location evidence="4">Cell projection</location>
        <location evidence="4">Neuron projection</location>
    </subcellularLocation>
</comment>
<comment type="tissue specificity">
    <text evidence="4">Highly expressed in the brain. Also found in the liver, kidney and testis. In the brain shows a strongest expression in the hippocampus and cerebellum.</text>
</comment>
<comment type="developmental stage">
    <text evidence="4">At embryonic day 16 (16 dpc) can be detected in the hippocampal anlage, thalamus, cortex and olfactory bulb. At perinatal stages (20 dpc to P1) shows a strong expression in the cortex and hippocampus and subsequently declines at later postnatal stages.</text>
</comment>
<comment type="induction">
    <text evidence="4">Shows a transient down-regulation due to overexcitation of neurons induced by kainic acid.</text>
</comment>
<comment type="similarity">
    <text evidence="6">Belongs to the PA-phosphatase related phosphoesterase family.</text>
</comment>
<comment type="caution">
    <text evidence="7">Has no 2-lysophosphatidate/LPA phosphatase activity. This is supported by the fact that the phosphatase sequence motifs as well as the His residue acting as a nucleophile in active phosphatases of the PA-phosphatase related phosphoesterase family are not conserved.</text>
</comment>
<name>PLPR1_RAT</name>
<organism>
    <name type="scientific">Rattus norvegicus</name>
    <name type="common">Rat</name>
    <dbReference type="NCBI Taxonomy" id="10116"/>
    <lineage>
        <taxon>Eukaryota</taxon>
        <taxon>Metazoa</taxon>
        <taxon>Chordata</taxon>
        <taxon>Craniata</taxon>
        <taxon>Vertebrata</taxon>
        <taxon>Euteleostomi</taxon>
        <taxon>Mammalia</taxon>
        <taxon>Eutheria</taxon>
        <taxon>Euarchontoglires</taxon>
        <taxon>Glires</taxon>
        <taxon>Rodentia</taxon>
        <taxon>Myomorpha</taxon>
        <taxon>Muroidea</taxon>
        <taxon>Muridae</taxon>
        <taxon>Murinae</taxon>
        <taxon>Rattus</taxon>
    </lineage>
</organism>
<protein>
    <recommendedName>
        <fullName evidence="2">Phospholipid phosphatase-related protein type 1</fullName>
    </recommendedName>
    <alternativeName>
        <fullName evidence="7">Inactive 2-lysophosphatidate phosphatase PLPPR1</fullName>
    </alternativeName>
    <alternativeName>
        <fullName evidence="2">Lipid phosphate phosphatase-related protein type 1</fullName>
    </alternativeName>
    <alternativeName>
        <fullName evidence="7">Plasticity-related gene 3 protein</fullName>
        <shortName evidence="5">PRG-3</shortName>
    </alternativeName>
</protein>
<gene>
    <name evidence="8" type="primary">Plppr1</name>
    <name evidence="2" type="synonym">Lppr1</name>
    <name type="synonym">Prg3</name>
</gene>